<protein>
    <recommendedName>
        <fullName evidence="9">Trafficking protein particle complex subunit 6B</fullName>
        <shortName>TRAPP complex subunit 6B</shortName>
    </recommendedName>
</protein>
<comment type="function">
    <text evidence="2 3 11">Component of a transport protein particle (TRAPP) complex that may function in specific stages of inter-organelle traffic (PubMed:16025134, PubMed:16828797). Specifically involved in the early development of neural circuitry, likely by controlling the frequency and amplitude of intracellular calcium transients implicated in the regulation of neuron differentiation and survival (Probable).</text>
</comment>
<comment type="subunit">
    <text evidence="2 3">Homodimer (PubMed:16025134, PubMed:16828797). Part of a TRAPP complex. Heterodimer with TRAPPC3 (PubMed:16025134, PubMed:16828797). The heterodimer TRAPPC6B-TRAPPC3 interacts with TRAPPC1 likely providing a core for TRAPP complex formation (PubMed:16828797).</text>
</comment>
<comment type="interaction">
    <interactant intactId="EBI-6160531">
        <id>Q86SZ2</id>
    </interactant>
    <interactant intactId="EBI-743566">
        <id>O43617</id>
        <label>TRAPPC3</label>
    </interactant>
    <organismsDiffer>false</organismsDiffer>
    <experiments>3</experiments>
</comment>
<comment type="subcellular location">
    <subcellularLocation>
        <location evidence="1">Golgi apparatus</location>
        <location evidence="1">cis-Golgi network</location>
    </subcellularLocation>
    <subcellularLocation>
        <location evidence="1">Endoplasmic reticulum</location>
    </subcellularLocation>
</comment>
<comment type="alternative products">
    <event type="alternative splicing"/>
    <isoform>
        <id>Q86SZ2-1</id>
        <name>1</name>
        <sequence type="displayed"/>
    </isoform>
    <isoform>
        <id>Q86SZ2-2</id>
        <name>2</name>
        <sequence type="described" ref="VSP_009659"/>
    </isoform>
</comment>
<comment type="tissue specificity">
    <text evidence="5">Both isoforms are expressed ubiquitously (at transcript level), isoform 1 being the most predominant (PubMed:28626029). Expressed in the fetal brain and different regions of the adult brain and spinal cord (PubMed:28626029).</text>
</comment>
<comment type="disease" evidence="4 5">
    <disease id="DI-05188">
        <name>Neurodevelopmental disorder with microcephaly, epilepsy, and brain atrophy</name>
        <acronym>NEDMEBA</acronym>
        <description>An autosomal recessive neurodevelopmental disorder characterized by microcephaly, global developmental delay, hypotonia, intellectual disability, autistic features such as poor social interaction, language impairment and repetitive automatism behaviors, and generalized tonic-clonic seizures. Brain imaging shows cortical atrophy, thin corpus callosum, and cerebellar and brainstem atrophy.</description>
        <dbReference type="MIM" id="617862"/>
    </disease>
    <text>The disease is caused by variants affecting the gene represented in this entry.</text>
</comment>
<comment type="similarity">
    <text evidence="10">Belongs to the TRAPP small subunits family. BET3 subfamily.</text>
</comment>
<comment type="caution">
    <text evidence="5">May not be essential for endoplasmic reticulum-to-Golgi transport.</text>
</comment>
<comment type="sequence caution" evidence="10">
    <conflict type="erroneous initiation">
        <sequence resource="EMBL-CDS" id="CAD62341"/>
    </conflict>
</comment>
<accession>Q86SZ2</accession>
<accession>B3KPS2</accession>
<accession>Q5JPD6</accession>
<accession>Q86U35</accession>
<accession>Q86X35</accession>
<name>TPC6B_HUMAN</name>
<dbReference type="EMBL" id="BX161510">
    <property type="protein sequence ID" value="CAD61947.1"/>
    <property type="molecule type" value="mRNA"/>
</dbReference>
<dbReference type="EMBL" id="BX248013">
    <property type="protein sequence ID" value="CAD62341.1"/>
    <property type="status" value="ALT_INIT"/>
    <property type="molecule type" value="mRNA"/>
</dbReference>
<dbReference type="EMBL" id="AL833179">
    <property type="protein sequence ID" value="CAI46185.1"/>
    <property type="molecule type" value="mRNA"/>
</dbReference>
<dbReference type="EMBL" id="AK056690">
    <property type="protein sequence ID" value="BAG51784.1"/>
    <property type="molecule type" value="mRNA"/>
</dbReference>
<dbReference type="EMBL" id="CH471078">
    <property type="protein sequence ID" value="EAW65823.1"/>
    <property type="molecule type" value="Genomic_DNA"/>
</dbReference>
<dbReference type="EMBL" id="CH471078">
    <property type="protein sequence ID" value="EAW65824.1"/>
    <property type="molecule type" value="Genomic_DNA"/>
</dbReference>
<dbReference type="EMBL" id="BC047328">
    <property type="protein sequence ID" value="AAH47328.1"/>
    <property type="molecule type" value="mRNA"/>
</dbReference>
<dbReference type="CCDS" id="CCDS41947.1">
    <molecule id="Q86SZ2-1"/>
</dbReference>
<dbReference type="CCDS" id="CCDS9670.1">
    <molecule id="Q86SZ2-2"/>
</dbReference>
<dbReference type="RefSeq" id="NP_001073005.1">
    <molecule id="Q86SZ2-1"/>
    <property type="nucleotide sequence ID" value="NM_001079537.2"/>
</dbReference>
<dbReference type="RefSeq" id="NP_803235.1">
    <molecule id="Q86SZ2-2"/>
    <property type="nucleotide sequence ID" value="NM_177452.4"/>
</dbReference>
<dbReference type="PDB" id="2BJN">
    <property type="method" value="X-ray"/>
    <property type="resolution" value="1.70 A"/>
    <property type="chains" value="A/B=1-158"/>
</dbReference>
<dbReference type="PDB" id="2CFH">
    <property type="method" value="X-ray"/>
    <property type="resolution" value="2.30 A"/>
    <property type="chains" value="C/D=1-158"/>
</dbReference>
<dbReference type="PDB" id="3KXC">
    <property type="method" value="X-ray"/>
    <property type="resolution" value="2.00 A"/>
    <property type="chains" value="C=1-158"/>
</dbReference>
<dbReference type="PDBsum" id="2BJN"/>
<dbReference type="PDBsum" id="2CFH"/>
<dbReference type="PDBsum" id="3KXC"/>
<dbReference type="SMR" id="Q86SZ2"/>
<dbReference type="BioGRID" id="125777">
    <property type="interactions" value="42"/>
</dbReference>
<dbReference type="ComplexPortal" id="CPX-4749">
    <property type="entry name" value="TRAPP II complex, TRAPPC2 variant"/>
</dbReference>
<dbReference type="ComplexPortal" id="CPX-6902">
    <property type="entry name" value="TRAPP II complex, TRAPPC2B variant"/>
</dbReference>
<dbReference type="CORUM" id="Q86SZ2"/>
<dbReference type="DIP" id="DIP-47626N"/>
<dbReference type="FunCoup" id="Q86SZ2">
    <property type="interactions" value="1313"/>
</dbReference>
<dbReference type="IntAct" id="Q86SZ2">
    <property type="interactions" value="32"/>
</dbReference>
<dbReference type="MINT" id="Q86SZ2"/>
<dbReference type="STRING" id="9606.ENSP00000330289"/>
<dbReference type="DrugBank" id="DB08342">
    <property type="generic name" value="S-palmitoyl-L-cysteine"/>
</dbReference>
<dbReference type="iPTMnet" id="Q86SZ2"/>
<dbReference type="PhosphoSitePlus" id="Q86SZ2"/>
<dbReference type="BioMuta" id="TRAPPC6B"/>
<dbReference type="DMDM" id="45477299"/>
<dbReference type="jPOST" id="Q86SZ2"/>
<dbReference type="MassIVE" id="Q86SZ2"/>
<dbReference type="PaxDb" id="9606-ENSP00000330289"/>
<dbReference type="PeptideAtlas" id="Q86SZ2"/>
<dbReference type="ProteomicsDB" id="69650">
    <molecule id="Q86SZ2-1"/>
</dbReference>
<dbReference type="ProteomicsDB" id="69651">
    <molecule id="Q86SZ2-2"/>
</dbReference>
<dbReference type="Pumba" id="Q86SZ2"/>
<dbReference type="Antibodypedia" id="23365">
    <property type="antibodies" value="61 antibodies from 18 providers"/>
</dbReference>
<dbReference type="DNASU" id="122553"/>
<dbReference type="Ensembl" id="ENST00000330149.10">
    <molecule id="Q86SZ2-1"/>
    <property type="protein sequence ID" value="ENSP00000330289.5"/>
    <property type="gene ID" value="ENSG00000182400.15"/>
</dbReference>
<dbReference type="Ensembl" id="ENST00000347691.9">
    <molecule id="Q86SZ2-2"/>
    <property type="protein sequence ID" value="ENSP00000335171.6"/>
    <property type="gene ID" value="ENSG00000182400.15"/>
</dbReference>
<dbReference type="GeneID" id="122553"/>
<dbReference type="KEGG" id="hsa:122553"/>
<dbReference type="MANE-Select" id="ENST00000330149.10">
    <property type="protein sequence ID" value="ENSP00000330289.5"/>
    <property type="RefSeq nucleotide sequence ID" value="NM_001079537.2"/>
    <property type="RefSeq protein sequence ID" value="NP_001073005.1"/>
</dbReference>
<dbReference type="UCSC" id="uc001wut.2">
    <molecule id="Q86SZ2-1"/>
    <property type="organism name" value="human"/>
</dbReference>
<dbReference type="AGR" id="HGNC:23066"/>
<dbReference type="CTD" id="122553"/>
<dbReference type="DisGeNET" id="122553"/>
<dbReference type="GeneCards" id="TRAPPC6B"/>
<dbReference type="HGNC" id="HGNC:23066">
    <property type="gene designation" value="TRAPPC6B"/>
</dbReference>
<dbReference type="HPA" id="ENSG00000182400">
    <property type="expression patterns" value="Low tissue specificity"/>
</dbReference>
<dbReference type="MalaCards" id="TRAPPC6B"/>
<dbReference type="MIM" id="610397">
    <property type="type" value="gene"/>
</dbReference>
<dbReference type="MIM" id="617862">
    <property type="type" value="phenotype"/>
</dbReference>
<dbReference type="neXtProt" id="NX_Q86SZ2"/>
<dbReference type="OpenTargets" id="ENSG00000182400"/>
<dbReference type="PharmGKB" id="PA134973191"/>
<dbReference type="VEuPathDB" id="HostDB:ENSG00000182400"/>
<dbReference type="eggNOG" id="KOG3316">
    <property type="taxonomic scope" value="Eukaryota"/>
</dbReference>
<dbReference type="GeneTree" id="ENSGT00390000012948"/>
<dbReference type="HOGENOM" id="CLU_076409_3_1_1"/>
<dbReference type="InParanoid" id="Q86SZ2"/>
<dbReference type="OMA" id="CKEFWTA"/>
<dbReference type="OrthoDB" id="941624at2759"/>
<dbReference type="PAN-GO" id="Q86SZ2">
    <property type="GO annotations" value="4 GO annotations based on evolutionary models"/>
</dbReference>
<dbReference type="PhylomeDB" id="Q86SZ2"/>
<dbReference type="TreeFam" id="TF313010"/>
<dbReference type="PathwayCommons" id="Q86SZ2"/>
<dbReference type="Reactome" id="R-HSA-204005">
    <property type="pathway name" value="COPII-mediated vesicle transport"/>
</dbReference>
<dbReference type="Reactome" id="R-HSA-8876198">
    <property type="pathway name" value="RAB GEFs exchange GTP for GDP on RABs"/>
</dbReference>
<dbReference type="SignaLink" id="Q86SZ2"/>
<dbReference type="BioGRID-ORCS" id="122553">
    <property type="hits" value="6 hits in 1155 CRISPR screens"/>
</dbReference>
<dbReference type="ChiTaRS" id="TRAPPC6B">
    <property type="organism name" value="human"/>
</dbReference>
<dbReference type="EvolutionaryTrace" id="Q86SZ2"/>
<dbReference type="GenomeRNAi" id="122553"/>
<dbReference type="Pharos" id="Q86SZ2">
    <property type="development level" value="Tbio"/>
</dbReference>
<dbReference type="PRO" id="PR:Q86SZ2"/>
<dbReference type="Proteomes" id="UP000005640">
    <property type="component" value="Chromosome 14"/>
</dbReference>
<dbReference type="RNAct" id="Q86SZ2">
    <property type="molecule type" value="protein"/>
</dbReference>
<dbReference type="Bgee" id="ENSG00000182400">
    <property type="expression patterns" value="Expressed in calcaneal tendon and 185 other cell types or tissues"/>
</dbReference>
<dbReference type="ExpressionAtlas" id="Q86SZ2">
    <property type="expression patterns" value="baseline and differential"/>
</dbReference>
<dbReference type="GO" id="GO:0005801">
    <property type="term" value="C:cis-Golgi network"/>
    <property type="evidence" value="ECO:0000318"/>
    <property type="project" value="GO_Central"/>
</dbReference>
<dbReference type="GO" id="GO:0005737">
    <property type="term" value="C:cytoplasm"/>
    <property type="evidence" value="ECO:0000303"/>
    <property type="project" value="ComplexPortal"/>
</dbReference>
<dbReference type="GO" id="GO:0005829">
    <property type="term" value="C:cytosol"/>
    <property type="evidence" value="ECO:0000304"/>
    <property type="project" value="Reactome"/>
</dbReference>
<dbReference type="GO" id="GO:0005783">
    <property type="term" value="C:endoplasmic reticulum"/>
    <property type="evidence" value="ECO:0007669"/>
    <property type="project" value="UniProtKB-SubCell"/>
</dbReference>
<dbReference type="GO" id="GO:0005802">
    <property type="term" value="C:trans-Golgi network"/>
    <property type="evidence" value="ECO:0000318"/>
    <property type="project" value="GO_Central"/>
</dbReference>
<dbReference type="GO" id="GO:0030008">
    <property type="term" value="C:TRAPP complex"/>
    <property type="evidence" value="ECO:0000318"/>
    <property type="project" value="GO_Central"/>
</dbReference>
<dbReference type="GO" id="GO:1990071">
    <property type="term" value="C:TRAPPII protein complex"/>
    <property type="evidence" value="ECO:0000303"/>
    <property type="project" value="ComplexPortal"/>
</dbReference>
<dbReference type="GO" id="GO:0006888">
    <property type="term" value="P:endoplasmic reticulum to Golgi vesicle-mediated transport"/>
    <property type="evidence" value="ECO:0000318"/>
    <property type="project" value="GO_Central"/>
</dbReference>
<dbReference type="GO" id="GO:0007399">
    <property type="term" value="P:nervous system development"/>
    <property type="evidence" value="ECO:0007669"/>
    <property type="project" value="UniProtKB-KW"/>
</dbReference>
<dbReference type="GO" id="GO:0006901">
    <property type="term" value="P:vesicle coating"/>
    <property type="evidence" value="ECO:0000303"/>
    <property type="project" value="ComplexPortal"/>
</dbReference>
<dbReference type="GO" id="GO:0099022">
    <property type="term" value="P:vesicle tethering"/>
    <property type="evidence" value="ECO:0000303"/>
    <property type="project" value="ComplexPortal"/>
</dbReference>
<dbReference type="CDD" id="cd14944">
    <property type="entry name" value="TRAPPC6A_Trs33"/>
    <property type="match status" value="1"/>
</dbReference>
<dbReference type="FunFam" id="3.30.1380.20:FF:000004">
    <property type="entry name" value="Trafficking protein particle complex subunit 6B"/>
    <property type="match status" value="1"/>
</dbReference>
<dbReference type="Gene3D" id="3.30.1380.20">
    <property type="entry name" value="Trafficking protein particle complex subunit 3"/>
    <property type="match status" value="1"/>
</dbReference>
<dbReference type="InterPro" id="IPR024096">
    <property type="entry name" value="NO_sig/Golgi_transp_ligand-bd"/>
</dbReference>
<dbReference type="InterPro" id="IPR007194">
    <property type="entry name" value="TRAPP_component"/>
</dbReference>
<dbReference type="InterPro" id="IPR037992">
    <property type="entry name" value="TRAPPC6/Trs33"/>
</dbReference>
<dbReference type="PANTHER" id="PTHR12817">
    <property type="entry name" value="TRAFFICKING PROTEIN PARTICLE COMPLEX SUBUNIT 6B"/>
    <property type="match status" value="1"/>
</dbReference>
<dbReference type="PANTHER" id="PTHR12817:SF3">
    <property type="entry name" value="TRAFFICKING PROTEIN PARTICLE COMPLEX SUBUNIT 6B"/>
    <property type="match status" value="1"/>
</dbReference>
<dbReference type="Pfam" id="PF04051">
    <property type="entry name" value="TRAPP"/>
    <property type="match status" value="1"/>
</dbReference>
<dbReference type="SUPFAM" id="SSF111126">
    <property type="entry name" value="Ligand-binding domain in the NO signalling and Golgi transport"/>
    <property type="match status" value="1"/>
</dbReference>
<organism>
    <name type="scientific">Homo sapiens</name>
    <name type="common">Human</name>
    <dbReference type="NCBI Taxonomy" id="9606"/>
    <lineage>
        <taxon>Eukaryota</taxon>
        <taxon>Metazoa</taxon>
        <taxon>Chordata</taxon>
        <taxon>Craniata</taxon>
        <taxon>Vertebrata</taxon>
        <taxon>Euteleostomi</taxon>
        <taxon>Mammalia</taxon>
        <taxon>Eutheria</taxon>
        <taxon>Euarchontoglires</taxon>
        <taxon>Primates</taxon>
        <taxon>Haplorrhini</taxon>
        <taxon>Catarrhini</taxon>
        <taxon>Hominidae</taxon>
        <taxon>Homo</taxon>
    </lineage>
</organism>
<gene>
    <name evidence="8 9 12" type="primary">TRAPPC6B</name>
</gene>
<feature type="chain" id="PRO_0000211587" description="Trafficking protein particle complex subunit 6B">
    <location>
        <begin position="1"/>
        <end position="158"/>
    </location>
</feature>
<feature type="splice variant" id="VSP_009659" description="In isoform 2." evidence="6 7">
    <location>
        <begin position="90"/>
        <end position="117"/>
    </location>
</feature>
<feature type="sequence variant" id="VAR_080729" description="In NEDMEBA." evidence="4">
    <location>
        <begin position="42"/>
        <end position="158"/>
    </location>
</feature>
<feature type="mutagenesis site" description="Impairs interaction with TRAPPC1." evidence="3">
    <original>RC</original>
    <variation>EL</variation>
    <location>
        <begin position="31"/>
        <end position="32"/>
    </location>
</feature>
<feature type="helix" evidence="13">
    <location>
        <begin position="1"/>
        <end position="20"/>
    </location>
</feature>
<feature type="turn" evidence="13">
    <location>
        <begin position="24"/>
        <end position="30"/>
    </location>
</feature>
<feature type="helix" evidence="13">
    <location>
        <begin position="31"/>
        <end position="48"/>
    </location>
</feature>
<feature type="helix" evidence="13">
    <location>
        <begin position="62"/>
        <end position="69"/>
    </location>
</feature>
<feature type="helix" evidence="13">
    <location>
        <begin position="71"/>
        <end position="77"/>
    </location>
</feature>
<feature type="strand" evidence="13">
    <location>
        <begin position="82"/>
        <end position="88"/>
    </location>
</feature>
<feature type="strand" evidence="13">
    <location>
        <begin position="91"/>
        <end position="98"/>
    </location>
</feature>
<feature type="helix" evidence="13">
    <location>
        <begin position="100"/>
        <end position="102"/>
    </location>
</feature>
<feature type="helix" evidence="13">
    <location>
        <begin position="116"/>
        <end position="118"/>
    </location>
</feature>
<feature type="helix" evidence="13">
    <location>
        <begin position="120"/>
        <end position="132"/>
    </location>
</feature>
<feature type="strand" evidence="13">
    <location>
        <begin position="136"/>
        <end position="145"/>
    </location>
</feature>
<feature type="strand" evidence="13">
    <location>
        <begin position="149"/>
        <end position="156"/>
    </location>
</feature>
<proteinExistence type="evidence at protein level"/>
<sequence length="158" mass="17983">MADEALFLLLHNEMVSGVYKSAEQGEVENGRCITKLENMGFRVGQGLIERFTKDTARFKDELDIMKFICKDFWTTVFKKQIDNLRTNHQGIYVLQDNKFRLLTQMSAGKQYLEHASKYLAFTCGLIRGGLSNLGIKSIVTAEVSSMPACKFQVMIQKL</sequence>
<evidence type="ECO:0000250" key="1"/>
<evidence type="ECO:0000269" key="2">
    <source>
    </source>
</evidence>
<evidence type="ECO:0000269" key="3">
    <source>
    </source>
</evidence>
<evidence type="ECO:0000269" key="4">
    <source>
    </source>
</evidence>
<evidence type="ECO:0000269" key="5">
    <source>
    </source>
</evidence>
<evidence type="ECO:0000303" key="6">
    <source>
    </source>
</evidence>
<evidence type="ECO:0000303" key="7">
    <source>
    </source>
</evidence>
<evidence type="ECO:0000303" key="8">
    <source>
    </source>
</evidence>
<evidence type="ECO:0000303" key="9">
    <source>
    </source>
</evidence>
<evidence type="ECO:0000305" key="10"/>
<evidence type="ECO:0000305" key="11">
    <source>
    </source>
</evidence>
<evidence type="ECO:0000312" key="12">
    <source>
        <dbReference type="HGNC" id="HGNC:23066"/>
    </source>
</evidence>
<evidence type="ECO:0007829" key="13">
    <source>
        <dbReference type="PDB" id="2BJN"/>
    </source>
</evidence>
<keyword id="KW-0002">3D-structure</keyword>
<keyword id="KW-0025">Alternative splicing</keyword>
<keyword id="KW-0225">Disease variant</keyword>
<keyword id="KW-0256">Endoplasmic reticulum</keyword>
<keyword id="KW-0887">Epilepsy</keyword>
<keyword id="KW-0333">Golgi apparatus</keyword>
<keyword id="KW-0991">Intellectual disability</keyword>
<keyword id="KW-0524">Neurogenesis</keyword>
<keyword id="KW-1267">Proteomics identification</keyword>
<keyword id="KW-1185">Reference proteome</keyword>
<reference key="1">
    <citation type="submission" date="2003-01" db="EMBL/GenBank/DDBJ databases">
        <title>Full-length cDNA libraries and normalization.</title>
        <authorList>
            <person name="Li W.B."/>
            <person name="Gruber C."/>
            <person name="Jessee J."/>
            <person name="Polayes D."/>
        </authorList>
    </citation>
    <scope>NUCLEOTIDE SEQUENCE [LARGE SCALE MRNA] (ISOFORM 1)</scope>
    <source>
        <tissue>Cervix carcinoma</tissue>
        <tissue>Fetal liver</tissue>
    </source>
</reference>
<reference key="2">
    <citation type="journal article" date="2007" name="BMC Genomics">
        <title>The full-ORF clone resource of the German cDNA consortium.</title>
        <authorList>
            <person name="Bechtel S."/>
            <person name="Rosenfelder H."/>
            <person name="Duda A."/>
            <person name="Schmidt C.P."/>
            <person name="Ernst U."/>
            <person name="Wellenreuther R."/>
            <person name="Mehrle A."/>
            <person name="Schuster C."/>
            <person name="Bahr A."/>
            <person name="Bloecker H."/>
            <person name="Heubner D."/>
            <person name="Hoerlein A."/>
            <person name="Michel G."/>
            <person name="Wedler H."/>
            <person name="Koehrer K."/>
            <person name="Ottenwaelder B."/>
            <person name="Poustka A."/>
            <person name="Wiemann S."/>
            <person name="Schupp I."/>
        </authorList>
    </citation>
    <scope>NUCLEOTIDE SEQUENCE [LARGE SCALE MRNA] (ISOFORM 1)</scope>
    <source>
        <tissue>Lymph node</tissue>
    </source>
</reference>
<reference key="3">
    <citation type="journal article" date="2004" name="Nat. Genet.">
        <title>Complete sequencing and characterization of 21,243 full-length human cDNAs.</title>
        <authorList>
            <person name="Ota T."/>
            <person name="Suzuki Y."/>
            <person name="Nishikawa T."/>
            <person name="Otsuki T."/>
            <person name="Sugiyama T."/>
            <person name="Irie R."/>
            <person name="Wakamatsu A."/>
            <person name="Hayashi K."/>
            <person name="Sato H."/>
            <person name="Nagai K."/>
            <person name="Kimura K."/>
            <person name="Makita H."/>
            <person name="Sekine M."/>
            <person name="Obayashi M."/>
            <person name="Nishi T."/>
            <person name="Shibahara T."/>
            <person name="Tanaka T."/>
            <person name="Ishii S."/>
            <person name="Yamamoto J."/>
            <person name="Saito K."/>
            <person name="Kawai Y."/>
            <person name="Isono Y."/>
            <person name="Nakamura Y."/>
            <person name="Nagahari K."/>
            <person name="Murakami K."/>
            <person name="Yasuda T."/>
            <person name="Iwayanagi T."/>
            <person name="Wagatsuma M."/>
            <person name="Shiratori A."/>
            <person name="Sudo H."/>
            <person name="Hosoiri T."/>
            <person name="Kaku Y."/>
            <person name="Kodaira H."/>
            <person name="Kondo H."/>
            <person name="Sugawara M."/>
            <person name="Takahashi M."/>
            <person name="Kanda K."/>
            <person name="Yokoi T."/>
            <person name="Furuya T."/>
            <person name="Kikkawa E."/>
            <person name="Omura Y."/>
            <person name="Abe K."/>
            <person name="Kamihara K."/>
            <person name="Katsuta N."/>
            <person name="Sato K."/>
            <person name="Tanikawa M."/>
            <person name="Yamazaki M."/>
            <person name="Ninomiya K."/>
            <person name="Ishibashi T."/>
            <person name="Yamashita H."/>
            <person name="Murakawa K."/>
            <person name="Fujimori K."/>
            <person name="Tanai H."/>
            <person name="Kimata M."/>
            <person name="Watanabe M."/>
            <person name="Hiraoka S."/>
            <person name="Chiba Y."/>
            <person name="Ishida S."/>
            <person name="Ono Y."/>
            <person name="Takiguchi S."/>
            <person name="Watanabe S."/>
            <person name="Yosida M."/>
            <person name="Hotuta T."/>
            <person name="Kusano J."/>
            <person name="Kanehori K."/>
            <person name="Takahashi-Fujii A."/>
            <person name="Hara H."/>
            <person name="Tanase T.-O."/>
            <person name="Nomura Y."/>
            <person name="Togiya S."/>
            <person name="Komai F."/>
            <person name="Hara R."/>
            <person name="Takeuchi K."/>
            <person name="Arita M."/>
            <person name="Imose N."/>
            <person name="Musashino K."/>
            <person name="Yuuki H."/>
            <person name="Oshima A."/>
            <person name="Sasaki N."/>
            <person name="Aotsuka S."/>
            <person name="Yoshikawa Y."/>
            <person name="Matsunawa H."/>
            <person name="Ichihara T."/>
            <person name="Shiohata N."/>
            <person name="Sano S."/>
            <person name="Moriya S."/>
            <person name="Momiyama H."/>
            <person name="Satoh N."/>
            <person name="Takami S."/>
            <person name="Terashima Y."/>
            <person name="Suzuki O."/>
            <person name="Nakagawa S."/>
            <person name="Senoh A."/>
            <person name="Mizoguchi H."/>
            <person name="Goto Y."/>
            <person name="Shimizu F."/>
            <person name="Wakebe H."/>
            <person name="Hishigaki H."/>
            <person name="Watanabe T."/>
            <person name="Sugiyama A."/>
            <person name="Takemoto M."/>
            <person name="Kawakami B."/>
            <person name="Yamazaki M."/>
            <person name="Watanabe K."/>
            <person name="Kumagai A."/>
            <person name="Itakura S."/>
            <person name="Fukuzumi Y."/>
            <person name="Fujimori Y."/>
            <person name="Komiyama M."/>
            <person name="Tashiro H."/>
            <person name="Tanigami A."/>
            <person name="Fujiwara T."/>
            <person name="Ono T."/>
            <person name="Yamada K."/>
            <person name="Fujii Y."/>
            <person name="Ozaki K."/>
            <person name="Hirao M."/>
            <person name="Ohmori Y."/>
            <person name="Kawabata A."/>
            <person name="Hikiji T."/>
            <person name="Kobatake N."/>
            <person name="Inagaki H."/>
            <person name="Ikema Y."/>
            <person name="Okamoto S."/>
            <person name="Okitani R."/>
            <person name="Kawakami T."/>
            <person name="Noguchi S."/>
            <person name="Itoh T."/>
            <person name="Shigeta K."/>
            <person name="Senba T."/>
            <person name="Matsumura K."/>
            <person name="Nakajima Y."/>
            <person name="Mizuno T."/>
            <person name="Morinaga M."/>
            <person name="Sasaki M."/>
            <person name="Togashi T."/>
            <person name="Oyama M."/>
            <person name="Hata H."/>
            <person name="Watanabe M."/>
            <person name="Komatsu T."/>
            <person name="Mizushima-Sugano J."/>
            <person name="Satoh T."/>
            <person name="Shirai Y."/>
            <person name="Takahashi Y."/>
            <person name="Nakagawa K."/>
            <person name="Okumura K."/>
            <person name="Nagase T."/>
            <person name="Nomura N."/>
            <person name="Kikuchi H."/>
            <person name="Masuho Y."/>
            <person name="Yamashita R."/>
            <person name="Nakai K."/>
            <person name="Yada T."/>
            <person name="Nakamura Y."/>
            <person name="Ohara O."/>
            <person name="Isogai T."/>
            <person name="Sugano S."/>
        </authorList>
    </citation>
    <scope>NUCLEOTIDE SEQUENCE [LARGE SCALE MRNA] (ISOFORM 2)</scope>
</reference>
<reference key="4">
    <citation type="submission" date="2005-09" db="EMBL/GenBank/DDBJ databases">
        <authorList>
            <person name="Mural R.J."/>
            <person name="Istrail S."/>
            <person name="Sutton G.G."/>
            <person name="Florea L."/>
            <person name="Halpern A.L."/>
            <person name="Mobarry C.M."/>
            <person name="Lippert R."/>
            <person name="Walenz B."/>
            <person name="Shatkay H."/>
            <person name="Dew I."/>
            <person name="Miller J.R."/>
            <person name="Flanigan M.J."/>
            <person name="Edwards N.J."/>
            <person name="Bolanos R."/>
            <person name="Fasulo D."/>
            <person name="Halldorsson B.V."/>
            <person name="Hannenhalli S."/>
            <person name="Turner R."/>
            <person name="Yooseph S."/>
            <person name="Lu F."/>
            <person name="Nusskern D.R."/>
            <person name="Shue B.C."/>
            <person name="Zheng X.H."/>
            <person name="Zhong F."/>
            <person name="Delcher A.L."/>
            <person name="Huson D.H."/>
            <person name="Kravitz S.A."/>
            <person name="Mouchard L."/>
            <person name="Reinert K."/>
            <person name="Remington K.A."/>
            <person name="Clark A.G."/>
            <person name="Waterman M.S."/>
            <person name="Eichler E.E."/>
            <person name="Adams M.D."/>
            <person name="Hunkapiller M.W."/>
            <person name="Myers E.W."/>
            <person name="Venter J.C."/>
        </authorList>
    </citation>
    <scope>NUCLEOTIDE SEQUENCE [LARGE SCALE GENOMIC DNA]</scope>
</reference>
<reference key="5">
    <citation type="journal article" date="2004" name="Genome Res.">
        <title>The status, quality, and expansion of the NIH full-length cDNA project: the Mammalian Gene Collection (MGC).</title>
        <authorList>
            <consortium name="The MGC Project Team"/>
        </authorList>
    </citation>
    <scope>NUCLEOTIDE SEQUENCE [LARGE SCALE MRNA] (ISOFORM 2)</scope>
    <source>
        <tissue>Uterus</tissue>
    </source>
</reference>
<reference key="6">
    <citation type="journal article" date="2011" name="BMC Syst. Biol.">
        <title>Initial characterization of the human central proteome.</title>
        <authorList>
            <person name="Burkard T.R."/>
            <person name="Planyavsky M."/>
            <person name="Kaupe I."/>
            <person name="Breitwieser F.P."/>
            <person name="Buerckstuemmer T."/>
            <person name="Bennett K.L."/>
            <person name="Superti-Furga G."/>
            <person name="Colinge J."/>
        </authorList>
    </citation>
    <scope>IDENTIFICATION BY MASS SPECTROMETRY [LARGE SCALE ANALYSIS]</scope>
</reference>
<reference key="7">
    <citation type="journal article" date="2018" name="J. Med. Genet.">
        <title>A homozygous founder mutation in TRAPPC6B associates with a neurodevelopmental disorder characterised by microcephaly, epilepsy and autistic features.</title>
        <authorList>
            <person name="Marin-Valencia I."/>
            <person name="Novarino G."/>
            <person name="Johansen A."/>
            <person name="Rosti B."/>
            <person name="Issa M.Y."/>
            <person name="Musaev D."/>
            <person name="Bhat G."/>
            <person name="Scott E."/>
            <person name="Silhavy J.L."/>
            <person name="Stanley V."/>
            <person name="Rosti R.O."/>
            <person name="Gleeson J.W."/>
            <person name="Imam F.B."/>
            <person name="Zaki M.S."/>
            <person name="Gleeson J.G."/>
        </authorList>
    </citation>
    <scope>INVOLVEMENT IN NEDMEBA</scope>
    <scope>TISSUE SPECIFICITY</scope>
    <scope>FUNCTION</scope>
</reference>
<reference key="8">
    <citation type="journal article" date="2005" name="EMBO Rep.">
        <title>The structure of the TRAPP subunit TPC6 suggests a model for a TRAPP subcomplex.</title>
        <authorList>
            <person name="Kuemmel D."/>
            <person name="Mueller J.J."/>
            <person name="Roske Y."/>
            <person name="Misselwitz R."/>
            <person name="Buessow K."/>
            <person name="Heinemann U."/>
        </authorList>
    </citation>
    <scope>X-RAY CRYSTALLOGRAPHY (1.7 ANGSTROMS)</scope>
    <scope>IDENTIFICATION BY MASS SPECTROMETRY</scope>
    <scope>SUBUNIT</scope>
    <scope>INTERACTION WITH TRAPPC3</scope>
    <scope>FUNCTION</scope>
</reference>
<reference key="9">
    <citation type="journal article" date="2006" name="J. Mol. Biol.">
        <title>Structure of the Bet3-Tpc6B core of TRAPP: two Tpc6 paralogs form trimeric complexes with Bet3 and Mum2.</title>
        <authorList>
            <person name="Kummel D."/>
            <person name="Muller J.J."/>
            <person name="Roske Y."/>
            <person name="Henke N."/>
            <person name="Heinemann U."/>
        </authorList>
    </citation>
    <scope>X-RAY CRYSTALLOGRAPHY (2.30 ANGSTROMS) IN COMPLEX WITH TRAPPC3</scope>
    <scope>SUBUNIT</scope>
    <scope>INTERACTION WITH TRAPPC3 AND TRAPPC1</scope>
    <scope>MUTAGENESIS OF 31-ARG-CYS-32</scope>
    <scope>FUNCTION</scope>
</reference>
<reference key="10">
    <citation type="journal article" date="2018" name="Mol. Psychiatry">
        <title>Mapping autosomal recessive intellectual disability: combined microarray and exome sequencing identifies 26 novel candidate genes in 192 consanguineous families.</title>
        <authorList>
            <person name="Harripaul R."/>
            <person name="Vasli N."/>
            <person name="Mikhailov A."/>
            <person name="Rafiq M.A."/>
            <person name="Mittal K."/>
            <person name="Windpassinger C."/>
            <person name="Sheikh T.I."/>
            <person name="Noor A."/>
            <person name="Mahmood H."/>
            <person name="Downey S."/>
            <person name="Johnson M."/>
            <person name="Vleuten K."/>
            <person name="Bell L."/>
            <person name="Ilyas M."/>
            <person name="Khan F.S."/>
            <person name="Khan V."/>
            <person name="Moradi M."/>
            <person name="Ayaz M."/>
            <person name="Naeem F."/>
            <person name="Heidari A."/>
            <person name="Ahmed I."/>
            <person name="Ghadami S."/>
            <person name="Agha Z."/>
            <person name="Zeinali S."/>
            <person name="Qamar R."/>
            <person name="Mozhdehipanah H."/>
            <person name="John P."/>
            <person name="Mir A."/>
            <person name="Ansar M."/>
            <person name="French L."/>
            <person name="Ayub M."/>
            <person name="Vincent J.B."/>
        </authorList>
    </citation>
    <scope>INVOLVEMENT IN NEDMEBA</scope>
    <scope>VARIANT NEDMEBA 42-ARG--LEU-158 DEL</scope>
</reference>